<proteinExistence type="inferred from homology"/>
<accession>Q2S1E4</accession>
<name>KAD_SALRD</name>
<gene>
    <name evidence="1" type="primary">adk</name>
    <name type="ordered locus">SRU_1875</name>
</gene>
<evidence type="ECO:0000255" key="1">
    <source>
        <dbReference type="HAMAP-Rule" id="MF_00235"/>
    </source>
</evidence>
<sequence>MRLIIFGPPGAGKGTQAGLLEERHGITQISTGDILREAMAQETELGQKAKSYIDAGELVPDALVRDLAEQAIADEGHDDFMLDGYPRTDQQAEWLTEFLASNETPLDGVLSMKVPDDVLVRRLSRRRVHEETGETYHLDHDPPPEDVDPDLIVQRSDDEPETIQNRLDVYREETAPLATYYEERDLLVPVDGTGGIEEVFGRIEEALDALER</sequence>
<keyword id="KW-0067">ATP-binding</keyword>
<keyword id="KW-0963">Cytoplasm</keyword>
<keyword id="KW-0418">Kinase</keyword>
<keyword id="KW-0545">Nucleotide biosynthesis</keyword>
<keyword id="KW-0547">Nucleotide-binding</keyword>
<keyword id="KW-1185">Reference proteome</keyword>
<keyword id="KW-0808">Transferase</keyword>
<dbReference type="EC" id="2.7.4.3" evidence="1"/>
<dbReference type="EMBL" id="CP000159">
    <property type="protein sequence ID" value="ABC45489.1"/>
    <property type="molecule type" value="Genomic_DNA"/>
</dbReference>
<dbReference type="RefSeq" id="WP_011404612.1">
    <property type="nucleotide sequence ID" value="NC_007677.1"/>
</dbReference>
<dbReference type="RefSeq" id="YP_445987.1">
    <property type="nucleotide sequence ID" value="NC_007677.1"/>
</dbReference>
<dbReference type="SMR" id="Q2S1E4"/>
<dbReference type="STRING" id="309807.SRU_1875"/>
<dbReference type="EnsemblBacteria" id="ABC45489">
    <property type="protein sequence ID" value="ABC45489"/>
    <property type="gene ID" value="SRU_1875"/>
</dbReference>
<dbReference type="KEGG" id="sru:SRU_1875"/>
<dbReference type="PATRIC" id="fig|309807.25.peg.1943"/>
<dbReference type="eggNOG" id="COG0563">
    <property type="taxonomic scope" value="Bacteria"/>
</dbReference>
<dbReference type="HOGENOM" id="CLU_032354_4_1_10"/>
<dbReference type="OrthoDB" id="9805030at2"/>
<dbReference type="UniPathway" id="UPA00588">
    <property type="reaction ID" value="UER00649"/>
</dbReference>
<dbReference type="Proteomes" id="UP000008674">
    <property type="component" value="Chromosome"/>
</dbReference>
<dbReference type="GO" id="GO:0005737">
    <property type="term" value="C:cytoplasm"/>
    <property type="evidence" value="ECO:0007669"/>
    <property type="project" value="UniProtKB-SubCell"/>
</dbReference>
<dbReference type="GO" id="GO:0004017">
    <property type="term" value="F:adenylate kinase activity"/>
    <property type="evidence" value="ECO:0007669"/>
    <property type="project" value="UniProtKB-UniRule"/>
</dbReference>
<dbReference type="GO" id="GO:0005524">
    <property type="term" value="F:ATP binding"/>
    <property type="evidence" value="ECO:0007669"/>
    <property type="project" value="UniProtKB-UniRule"/>
</dbReference>
<dbReference type="GO" id="GO:0044209">
    <property type="term" value="P:AMP salvage"/>
    <property type="evidence" value="ECO:0007669"/>
    <property type="project" value="UniProtKB-UniRule"/>
</dbReference>
<dbReference type="CDD" id="cd01428">
    <property type="entry name" value="ADK"/>
    <property type="match status" value="1"/>
</dbReference>
<dbReference type="FunFam" id="3.40.50.300:FF:000106">
    <property type="entry name" value="Adenylate kinase mitochondrial"/>
    <property type="match status" value="1"/>
</dbReference>
<dbReference type="Gene3D" id="3.40.50.300">
    <property type="entry name" value="P-loop containing nucleotide triphosphate hydrolases"/>
    <property type="match status" value="1"/>
</dbReference>
<dbReference type="HAMAP" id="MF_00235">
    <property type="entry name" value="Adenylate_kinase_Adk"/>
    <property type="match status" value="1"/>
</dbReference>
<dbReference type="InterPro" id="IPR006259">
    <property type="entry name" value="Adenyl_kin_sub"/>
</dbReference>
<dbReference type="InterPro" id="IPR000850">
    <property type="entry name" value="Adenylat/UMP-CMP_kin"/>
</dbReference>
<dbReference type="InterPro" id="IPR033690">
    <property type="entry name" value="Adenylat_kinase_CS"/>
</dbReference>
<dbReference type="InterPro" id="IPR036193">
    <property type="entry name" value="ADK_active_lid_dom_sf"/>
</dbReference>
<dbReference type="InterPro" id="IPR027417">
    <property type="entry name" value="P-loop_NTPase"/>
</dbReference>
<dbReference type="NCBIfam" id="TIGR01351">
    <property type="entry name" value="adk"/>
    <property type="match status" value="1"/>
</dbReference>
<dbReference type="NCBIfam" id="NF001381">
    <property type="entry name" value="PRK00279.1-3"/>
    <property type="match status" value="1"/>
</dbReference>
<dbReference type="NCBIfam" id="NF011100">
    <property type="entry name" value="PRK14527.1"/>
    <property type="match status" value="1"/>
</dbReference>
<dbReference type="PANTHER" id="PTHR23359">
    <property type="entry name" value="NUCLEOTIDE KINASE"/>
    <property type="match status" value="1"/>
</dbReference>
<dbReference type="Pfam" id="PF00406">
    <property type="entry name" value="ADK"/>
    <property type="match status" value="1"/>
</dbReference>
<dbReference type="PRINTS" id="PR00094">
    <property type="entry name" value="ADENYLTKNASE"/>
</dbReference>
<dbReference type="SUPFAM" id="SSF57774">
    <property type="entry name" value="Microbial and mitochondrial ADK, insert 'zinc finger' domain"/>
    <property type="match status" value="1"/>
</dbReference>
<dbReference type="SUPFAM" id="SSF52540">
    <property type="entry name" value="P-loop containing nucleoside triphosphate hydrolases"/>
    <property type="match status" value="1"/>
</dbReference>
<dbReference type="PROSITE" id="PS00113">
    <property type="entry name" value="ADENYLATE_KINASE"/>
    <property type="match status" value="1"/>
</dbReference>
<organism>
    <name type="scientific">Salinibacter ruber (strain DSM 13855 / M31)</name>
    <dbReference type="NCBI Taxonomy" id="309807"/>
    <lineage>
        <taxon>Bacteria</taxon>
        <taxon>Pseudomonadati</taxon>
        <taxon>Rhodothermota</taxon>
        <taxon>Rhodothermia</taxon>
        <taxon>Rhodothermales</taxon>
        <taxon>Salinibacteraceae</taxon>
        <taxon>Salinibacter</taxon>
    </lineage>
</organism>
<feature type="chain" id="PRO_1000191163" description="Adenylate kinase">
    <location>
        <begin position="1"/>
        <end position="212"/>
    </location>
</feature>
<feature type="region of interest" description="NMP" evidence="1">
    <location>
        <begin position="30"/>
        <end position="59"/>
    </location>
</feature>
<feature type="region of interest" description="LID" evidence="1">
    <location>
        <begin position="125"/>
        <end position="158"/>
    </location>
</feature>
<feature type="binding site" evidence="1">
    <location>
        <begin position="10"/>
        <end position="15"/>
    </location>
    <ligand>
        <name>ATP</name>
        <dbReference type="ChEBI" id="CHEBI:30616"/>
    </ligand>
</feature>
<feature type="binding site" evidence="1">
    <location>
        <position position="31"/>
    </location>
    <ligand>
        <name>AMP</name>
        <dbReference type="ChEBI" id="CHEBI:456215"/>
    </ligand>
</feature>
<feature type="binding site" evidence="1">
    <location>
        <position position="36"/>
    </location>
    <ligand>
        <name>AMP</name>
        <dbReference type="ChEBI" id="CHEBI:456215"/>
    </ligand>
</feature>
<feature type="binding site" evidence="1">
    <location>
        <begin position="57"/>
        <end position="59"/>
    </location>
    <ligand>
        <name>AMP</name>
        <dbReference type="ChEBI" id="CHEBI:456215"/>
    </ligand>
</feature>
<feature type="binding site" evidence="1">
    <location>
        <begin position="84"/>
        <end position="87"/>
    </location>
    <ligand>
        <name>AMP</name>
        <dbReference type="ChEBI" id="CHEBI:456215"/>
    </ligand>
</feature>
<feature type="binding site" evidence="1">
    <location>
        <position position="91"/>
    </location>
    <ligand>
        <name>AMP</name>
        <dbReference type="ChEBI" id="CHEBI:456215"/>
    </ligand>
</feature>
<feature type="binding site" evidence="1">
    <location>
        <position position="126"/>
    </location>
    <ligand>
        <name>ATP</name>
        <dbReference type="ChEBI" id="CHEBI:30616"/>
    </ligand>
</feature>
<feature type="binding site" evidence="1">
    <location>
        <begin position="135"/>
        <end position="136"/>
    </location>
    <ligand>
        <name>ATP</name>
        <dbReference type="ChEBI" id="CHEBI:30616"/>
    </ligand>
</feature>
<feature type="binding site" evidence="1">
    <location>
        <position position="155"/>
    </location>
    <ligand>
        <name>AMP</name>
        <dbReference type="ChEBI" id="CHEBI:456215"/>
    </ligand>
</feature>
<feature type="binding site" evidence="1">
    <location>
        <position position="166"/>
    </location>
    <ligand>
        <name>AMP</name>
        <dbReference type="ChEBI" id="CHEBI:456215"/>
    </ligand>
</feature>
<feature type="binding site" evidence="1">
    <location>
        <position position="194"/>
    </location>
    <ligand>
        <name>ATP</name>
        <dbReference type="ChEBI" id="CHEBI:30616"/>
    </ligand>
</feature>
<reference key="1">
    <citation type="journal article" date="2005" name="Proc. Natl. Acad. Sci. U.S.A.">
        <title>The genome of Salinibacter ruber: convergence and gene exchange among hyperhalophilic bacteria and archaea.</title>
        <authorList>
            <person name="Mongodin E.F."/>
            <person name="Nelson K.E."/>
            <person name="Daugherty S."/>
            <person name="DeBoy R.T."/>
            <person name="Wister J."/>
            <person name="Khouri H."/>
            <person name="Weidman J."/>
            <person name="Walsh D.A."/>
            <person name="Papke R.T."/>
            <person name="Sanchez Perez G."/>
            <person name="Sharma A.K."/>
            <person name="Nesbo C.L."/>
            <person name="MacLeod D."/>
            <person name="Bapteste E."/>
            <person name="Doolittle W.F."/>
            <person name="Charlebois R.L."/>
            <person name="Legault B."/>
            <person name="Rodriguez-Valera F."/>
        </authorList>
    </citation>
    <scope>NUCLEOTIDE SEQUENCE [LARGE SCALE GENOMIC DNA]</scope>
    <source>
        <strain>DSM 13855 / CECT 5946 / M31</strain>
    </source>
</reference>
<protein>
    <recommendedName>
        <fullName evidence="1">Adenylate kinase</fullName>
        <shortName evidence="1">AK</shortName>
        <ecNumber evidence="1">2.7.4.3</ecNumber>
    </recommendedName>
    <alternativeName>
        <fullName evidence="1">ATP-AMP transphosphorylase</fullName>
    </alternativeName>
    <alternativeName>
        <fullName evidence="1">ATP:AMP phosphotransferase</fullName>
    </alternativeName>
    <alternativeName>
        <fullName evidence="1">Adenylate monophosphate kinase</fullName>
    </alternativeName>
</protein>
<comment type="function">
    <text evidence="1">Catalyzes the reversible transfer of the terminal phosphate group between ATP and AMP. Plays an important role in cellular energy homeostasis and in adenine nucleotide metabolism.</text>
</comment>
<comment type="catalytic activity">
    <reaction evidence="1">
        <text>AMP + ATP = 2 ADP</text>
        <dbReference type="Rhea" id="RHEA:12973"/>
        <dbReference type="ChEBI" id="CHEBI:30616"/>
        <dbReference type="ChEBI" id="CHEBI:456215"/>
        <dbReference type="ChEBI" id="CHEBI:456216"/>
        <dbReference type="EC" id="2.7.4.3"/>
    </reaction>
</comment>
<comment type="pathway">
    <text evidence="1">Purine metabolism; AMP biosynthesis via salvage pathway; AMP from ADP: step 1/1.</text>
</comment>
<comment type="subunit">
    <text evidence="1">Monomer.</text>
</comment>
<comment type="subcellular location">
    <subcellularLocation>
        <location evidence="1">Cytoplasm</location>
    </subcellularLocation>
</comment>
<comment type="domain">
    <text evidence="1">Consists of three domains, a large central CORE domain and two small peripheral domains, NMPbind and LID, which undergo movements during catalysis. The LID domain closes over the site of phosphoryl transfer upon ATP binding. Assembling and dissambling the active center during each catalytic cycle provides an effective means to prevent ATP hydrolysis.</text>
</comment>
<comment type="similarity">
    <text evidence="1">Belongs to the adenylate kinase family.</text>
</comment>